<proteinExistence type="inferred from homology"/>
<evidence type="ECO:0000255" key="1">
    <source>
        <dbReference type="HAMAP-Rule" id="MF_00291"/>
    </source>
</evidence>
<evidence type="ECO:0000305" key="2"/>
<organism>
    <name type="scientific">Fusobacterium nucleatum subsp. nucleatum (strain ATCC 25586 / DSM 15643 / BCRC 10681 / CIP 101130 / JCM 8532 / KCTC 2640 / LMG 13131 / VPI 4355)</name>
    <dbReference type="NCBI Taxonomy" id="190304"/>
    <lineage>
        <taxon>Bacteria</taxon>
        <taxon>Fusobacteriati</taxon>
        <taxon>Fusobacteriota</taxon>
        <taxon>Fusobacteriia</taxon>
        <taxon>Fusobacteriales</taxon>
        <taxon>Fusobacteriaceae</taxon>
        <taxon>Fusobacterium</taxon>
    </lineage>
</organism>
<gene>
    <name evidence="1" type="primary">rpsB</name>
    <name type="ordered locus">FN1620</name>
</gene>
<reference key="1">
    <citation type="journal article" date="2002" name="J. Bacteriol.">
        <title>Genome sequence and analysis of the oral bacterium Fusobacterium nucleatum strain ATCC 25586.</title>
        <authorList>
            <person name="Kapatral V."/>
            <person name="Anderson I."/>
            <person name="Ivanova N."/>
            <person name="Reznik G."/>
            <person name="Los T."/>
            <person name="Lykidis A."/>
            <person name="Bhattacharyya A."/>
            <person name="Bartman A."/>
            <person name="Gardner W."/>
            <person name="Grechkin G."/>
            <person name="Zhu L."/>
            <person name="Vasieva O."/>
            <person name="Chu L."/>
            <person name="Kogan Y."/>
            <person name="Chaga O."/>
            <person name="Goltsman E."/>
            <person name="Bernal A."/>
            <person name="Larsen N."/>
            <person name="D'Souza M."/>
            <person name="Walunas T."/>
            <person name="Pusch G."/>
            <person name="Haselkorn R."/>
            <person name="Fonstein M."/>
            <person name="Kyrpides N.C."/>
            <person name="Overbeek R."/>
        </authorList>
    </citation>
    <scope>NUCLEOTIDE SEQUENCE [LARGE SCALE GENOMIC DNA]</scope>
    <source>
        <strain>ATCC 25586 / DSM 15643 / BCRC 10681 / CIP 101130 / JCM 8532 / KCTC 2640 / LMG 13131 / VPI 4355</strain>
    </source>
</reference>
<name>RS2_FUSNN</name>
<sequence>MSVVSMKQLLEAGVHFGHQAKRWNPKMAKYIFTERNGIHVIDLHKSLKKIEEAYEEMRKIAEDGGKVLFVGTKKQAQEAIKEQAERSGMYYVNSRWLGGMLTNFSTIKKRIERMKELEKLDAEGILDTDYTKKEAAEFRKELSKLSKNLSGIRDMEKVPDAIYVVDVKMEELPVKEAHLLGIPVFAMIDTNVDPDLITYPIPANDDAIRSVKLITSVIANAIVEGNQGIENVEPQSEEVNVEEGSAE</sequence>
<accession>Q8RIH7</accession>
<comment type="similarity">
    <text evidence="1">Belongs to the universal ribosomal protein uS2 family.</text>
</comment>
<feature type="chain" id="PRO_0000134171" description="Small ribosomal subunit protein uS2">
    <location>
        <begin position="1"/>
        <end position="247"/>
    </location>
</feature>
<dbReference type="EMBL" id="AE009951">
    <property type="protein sequence ID" value="AAL93735.1"/>
    <property type="molecule type" value="Genomic_DNA"/>
</dbReference>
<dbReference type="RefSeq" id="NP_602436.1">
    <property type="nucleotide sequence ID" value="NC_003454.1"/>
</dbReference>
<dbReference type="RefSeq" id="WP_005904120.1">
    <property type="nucleotide sequence ID" value="NZ_OZ209243.1"/>
</dbReference>
<dbReference type="SMR" id="Q8RIH7"/>
<dbReference type="FunCoup" id="Q8RIH7">
    <property type="interactions" value="373"/>
</dbReference>
<dbReference type="STRING" id="190304.FN1620"/>
<dbReference type="PaxDb" id="190304-FN1620"/>
<dbReference type="EnsemblBacteria" id="AAL93735">
    <property type="protein sequence ID" value="AAL93735"/>
    <property type="gene ID" value="FN1620"/>
</dbReference>
<dbReference type="GeneID" id="79782559"/>
<dbReference type="KEGG" id="fnu:FN1620"/>
<dbReference type="PATRIC" id="fig|190304.8.peg.113"/>
<dbReference type="eggNOG" id="COG0052">
    <property type="taxonomic scope" value="Bacteria"/>
</dbReference>
<dbReference type="HOGENOM" id="CLU_040318_1_2_0"/>
<dbReference type="InParanoid" id="Q8RIH7"/>
<dbReference type="BioCyc" id="FNUC190304:G1FZS-123-MONOMER"/>
<dbReference type="Proteomes" id="UP000002521">
    <property type="component" value="Chromosome"/>
</dbReference>
<dbReference type="GO" id="GO:0022627">
    <property type="term" value="C:cytosolic small ribosomal subunit"/>
    <property type="evidence" value="ECO:0000318"/>
    <property type="project" value="GO_Central"/>
</dbReference>
<dbReference type="GO" id="GO:0003735">
    <property type="term" value="F:structural constituent of ribosome"/>
    <property type="evidence" value="ECO:0000318"/>
    <property type="project" value="GO_Central"/>
</dbReference>
<dbReference type="GO" id="GO:0006412">
    <property type="term" value="P:translation"/>
    <property type="evidence" value="ECO:0007669"/>
    <property type="project" value="UniProtKB-UniRule"/>
</dbReference>
<dbReference type="CDD" id="cd01425">
    <property type="entry name" value="RPS2"/>
    <property type="match status" value="1"/>
</dbReference>
<dbReference type="FunFam" id="1.10.287.610:FF:000001">
    <property type="entry name" value="30S ribosomal protein S2"/>
    <property type="match status" value="1"/>
</dbReference>
<dbReference type="Gene3D" id="3.40.50.10490">
    <property type="entry name" value="Glucose-6-phosphate isomerase like protein, domain 1"/>
    <property type="match status" value="1"/>
</dbReference>
<dbReference type="Gene3D" id="1.10.287.610">
    <property type="entry name" value="Helix hairpin bin"/>
    <property type="match status" value="1"/>
</dbReference>
<dbReference type="HAMAP" id="MF_00291_B">
    <property type="entry name" value="Ribosomal_uS2_B"/>
    <property type="match status" value="1"/>
</dbReference>
<dbReference type="InterPro" id="IPR001865">
    <property type="entry name" value="Ribosomal_uS2"/>
</dbReference>
<dbReference type="InterPro" id="IPR005706">
    <property type="entry name" value="Ribosomal_uS2_bac/mit/plastid"/>
</dbReference>
<dbReference type="InterPro" id="IPR018130">
    <property type="entry name" value="Ribosomal_uS2_CS"/>
</dbReference>
<dbReference type="InterPro" id="IPR023591">
    <property type="entry name" value="Ribosomal_uS2_flav_dom_sf"/>
</dbReference>
<dbReference type="NCBIfam" id="TIGR01011">
    <property type="entry name" value="rpsB_bact"/>
    <property type="match status" value="1"/>
</dbReference>
<dbReference type="PANTHER" id="PTHR12534">
    <property type="entry name" value="30S RIBOSOMAL PROTEIN S2 PROKARYOTIC AND ORGANELLAR"/>
    <property type="match status" value="1"/>
</dbReference>
<dbReference type="PANTHER" id="PTHR12534:SF0">
    <property type="entry name" value="SMALL RIBOSOMAL SUBUNIT PROTEIN US2M"/>
    <property type="match status" value="1"/>
</dbReference>
<dbReference type="Pfam" id="PF00318">
    <property type="entry name" value="Ribosomal_S2"/>
    <property type="match status" value="1"/>
</dbReference>
<dbReference type="PRINTS" id="PR00395">
    <property type="entry name" value="RIBOSOMALS2"/>
</dbReference>
<dbReference type="SUPFAM" id="SSF52313">
    <property type="entry name" value="Ribosomal protein S2"/>
    <property type="match status" value="1"/>
</dbReference>
<dbReference type="PROSITE" id="PS00962">
    <property type="entry name" value="RIBOSOMAL_S2_1"/>
    <property type="match status" value="1"/>
</dbReference>
<protein>
    <recommendedName>
        <fullName evidence="1">Small ribosomal subunit protein uS2</fullName>
    </recommendedName>
    <alternativeName>
        <fullName evidence="2">30S ribosomal protein S2</fullName>
    </alternativeName>
</protein>
<keyword id="KW-1185">Reference proteome</keyword>
<keyword id="KW-0687">Ribonucleoprotein</keyword>
<keyword id="KW-0689">Ribosomal protein</keyword>